<sequence length="171" mass="18791">MTKQHAFTREDLLRCSRGELFGPGNAQLPAPNMLMVDRITHISEEGGKYGKGELVAELDINPDLWFFACHFEGDPVMPGCLGLDAMWQLVGFFLGWQGLPGRGRALGSGEVKFFGQVLPEAKKVTYNIHIKRVLKGKLNMAIADGSVSVDGREIYTAEGLRVGVFTSTDNF</sequence>
<gene>
    <name evidence="1" type="primary">fabA</name>
    <name type="ordered locus">Pput_1694</name>
</gene>
<accession>A5W140</accession>
<protein>
    <recommendedName>
        <fullName evidence="1">3-hydroxydecanoyl-[acyl-carrier-protein] dehydratase</fullName>
        <ecNumber evidence="1">4.2.1.59</ecNumber>
    </recommendedName>
    <alternativeName>
        <fullName evidence="1">3-hydroxyacyl-[acyl-carrier-protein] dehydratase FabA</fullName>
    </alternativeName>
    <alternativeName>
        <fullName evidence="1">Beta-hydroxydecanoyl thioester dehydrase</fullName>
    </alternativeName>
    <alternativeName>
        <fullName evidence="1">Trans-2-decenoyl-[acyl-carrier-protein] isomerase</fullName>
        <ecNumber evidence="1">5.3.3.14</ecNumber>
    </alternativeName>
</protein>
<comment type="function">
    <text evidence="1">Necessary for the introduction of cis unsaturation into fatty acids. Catalyzes the dehydration of (3R)-3-hydroxydecanoyl-ACP to E-(2)-decenoyl-ACP and then its isomerization to Z-(3)-decenoyl-ACP. Can catalyze the dehydratase reaction for beta-hydroxyacyl-ACPs with saturated chain lengths up to 16:0, being most active on intermediate chain length.</text>
</comment>
<comment type="catalytic activity">
    <reaction evidence="1">
        <text>a (3R)-hydroxyacyl-[ACP] = a (2E)-enoyl-[ACP] + H2O</text>
        <dbReference type="Rhea" id="RHEA:13097"/>
        <dbReference type="Rhea" id="RHEA-COMP:9925"/>
        <dbReference type="Rhea" id="RHEA-COMP:9945"/>
        <dbReference type="ChEBI" id="CHEBI:15377"/>
        <dbReference type="ChEBI" id="CHEBI:78784"/>
        <dbReference type="ChEBI" id="CHEBI:78827"/>
        <dbReference type="EC" id="4.2.1.59"/>
    </reaction>
</comment>
<comment type="catalytic activity">
    <reaction evidence="1">
        <text>(3R)-hydroxydecanoyl-[ACP] = (2E)-decenoyl-[ACP] + H2O</text>
        <dbReference type="Rhea" id="RHEA:41860"/>
        <dbReference type="Rhea" id="RHEA-COMP:9638"/>
        <dbReference type="Rhea" id="RHEA-COMP:9639"/>
        <dbReference type="ChEBI" id="CHEBI:15377"/>
        <dbReference type="ChEBI" id="CHEBI:78466"/>
        <dbReference type="ChEBI" id="CHEBI:78467"/>
    </reaction>
</comment>
<comment type="catalytic activity">
    <reaction evidence="1">
        <text>(2E)-decenoyl-[ACP] = (3Z)-decenoyl-[ACP]</text>
        <dbReference type="Rhea" id="RHEA:23568"/>
        <dbReference type="Rhea" id="RHEA-COMP:9639"/>
        <dbReference type="Rhea" id="RHEA-COMP:9927"/>
        <dbReference type="ChEBI" id="CHEBI:78467"/>
        <dbReference type="ChEBI" id="CHEBI:78798"/>
        <dbReference type="EC" id="5.3.3.14"/>
    </reaction>
</comment>
<comment type="pathway">
    <text evidence="1">Lipid metabolism; fatty acid biosynthesis.</text>
</comment>
<comment type="subunit">
    <text evidence="1">Homodimer.</text>
</comment>
<comment type="subcellular location">
    <subcellularLocation>
        <location evidence="1">Cytoplasm</location>
    </subcellularLocation>
</comment>
<comment type="similarity">
    <text evidence="1">Belongs to the thioester dehydratase family. FabA subfamily.</text>
</comment>
<reference key="1">
    <citation type="submission" date="2007-05" db="EMBL/GenBank/DDBJ databases">
        <title>Complete sequence of Pseudomonas putida F1.</title>
        <authorList>
            <consortium name="US DOE Joint Genome Institute"/>
            <person name="Copeland A."/>
            <person name="Lucas S."/>
            <person name="Lapidus A."/>
            <person name="Barry K."/>
            <person name="Detter J.C."/>
            <person name="Glavina del Rio T."/>
            <person name="Hammon N."/>
            <person name="Israni S."/>
            <person name="Dalin E."/>
            <person name="Tice H."/>
            <person name="Pitluck S."/>
            <person name="Chain P."/>
            <person name="Malfatti S."/>
            <person name="Shin M."/>
            <person name="Vergez L."/>
            <person name="Schmutz J."/>
            <person name="Larimer F."/>
            <person name="Land M."/>
            <person name="Hauser L."/>
            <person name="Kyrpides N."/>
            <person name="Lykidis A."/>
            <person name="Parales R."/>
            <person name="Richardson P."/>
        </authorList>
    </citation>
    <scope>NUCLEOTIDE SEQUENCE [LARGE SCALE GENOMIC DNA]</scope>
    <source>
        <strain>ATCC 700007 / DSM 6899 / JCM 31910 / BCRC 17059 / LMG 24140 / F1</strain>
    </source>
</reference>
<feature type="chain" id="PRO_1000049830" description="3-hydroxydecanoyl-[acyl-carrier-protein] dehydratase">
    <location>
        <begin position="1"/>
        <end position="171"/>
    </location>
</feature>
<feature type="active site" evidence="1">
    <location>
        <position position="70"/>
    </location>
</feature>
<keyword id="KW-0963">Cytoplasm</keyword>
<keyword id="KW-0275">Fatty acid biosynthesis</keyword>
<keyword id="KW-0276">Fatty acid metabolism</keyword>
<keyword id="KW-0413">Isomerase</keyword>
<keyword id="KW-0444">Lipid biosynthesis</keyword>
<keyword id="KW-0443">Lipid metabolism</keyword>
<keyword id="KW-0456">Lyase</keyword>
<organism>
    <name type="scientific">Pseudomonas putida (strain ATCC 700007 / DSM 6899 / JCM 31910 / BCRC 17059 / LMG 24140 / F1)</name>
    <dbReference type="NCBI Taxonomy" id="351746"/>
    <lineage>
        <taxon>Bacteria</taxon>
        <taxon>Pseudomonadati</taxon>
        <taxon>Pseudomonadota</taxon>
        <taxon>Gammaproteobacteria</taxon>
        <taxon>Pseudomonadales</taxon>
        <taxon>Pseudomonadaceae</taxon>
        <taxon>Pseudomonas</taxon>
    </lineage>
</organism>
<dbReference type="EC" id="4.2.1.59" evidence="1"/>
<dbReference type="EC" id="5.3.3.14" evidence="1"/>
<dbReference type="EMBL" id="CP000712">
    <property type="protein sequence ID" value="ABQ77850.1"/>
    <property type="molecule type" value="Genomic_DNA"/>
</dbReference>
<dbReference type="SMR" id="A5W140"/>
<dbReference type="KEGG" id="ppf:Pput_1694"/>
<dbReference type="eggNOG" id="COG0764">
    <property type="taxonomic scope" value="Bacteria"/>
</dbReference>
<dbReference type="HOGENOM" id="CLU_097925_0_0_6"/>
<dbReference type="UniPathway" id="UPA00094"/>
<dbReference type="GO" id="GO:0005737">
    <property type="term" value="C:cytoplasm"/>
    <property type="evidence" value="ECO:0007669"/>
    <property type="project" value="UniProtKB-SubCell"/>
</dbReference>
<dbReference type="GO" id="GO:0019171">
    <property type="term" value="F:(3R)-hydroxyacyl-[acyl-carrier-protein] dehydratase activity"/>
    <property type="evidence" value="ECO:0007669"/>
    <property type="project" value="UniProtKB-UniRule"/>
</dbReference>
<dbReference type="GO" id="GO:0034017">
    <property type="term" value="F:trans-2-decenoyl-acyl-carrier-protein isomerase activity"/>
    <property type="evidence" value="ECO:0007669"/>
    <property type="project" value="UniProtKB-UniRule"/>
</dbReference>
<dbReference type="GO" id="GO:0006636">
    <property type="term" value="P:unsaturated fatty acid biosynthetic process"/>
    <property type="evidence" value="ECO:0007669"/>
    <property type="project" value="UniProtKB-UniRule"/>
</dbReference>
<dbReference type="CDD" id="cd01287">
    <property type="entry name" value="FabA"/>
    <property type="match status" value="1"/>
</dbReference>
<dbReference type="FunFam" id="3.10.129.10:FF:000003">
    <property type="entry name" value="3-hydroxydecanoyl-[acyl-carrier-protein] dehydratase"/>
    <property type="match status" value="1"/>
</dbReference>
<dbReference type="Gene3D" id="3.10.129.10">
    <property type="entry name" value="Hotdog Thioesterase"/>
    <property type="match status" value="1"/>
</dbReference>
<dbReference type="HAMAP" id="MF_00405">
    <property type="entry name" value="FabA"/>
    <property type="match status" value="1"/>
</dbReference>
<dbReference type="InterPro" id="IPR010083">
    <property type="entry name" value="FabA"/>
</dbReference>
<dbReference type="InterPro" id="IPR013114">
    <property type="entry name" value="FabA_FabZ"/>
</dbReference>
<dbReference type="InterPro" id="IPR029069">
    <property type="entry name" value="HotDog_dom_sf"/>
</dbReference>
<dbReference type="NCBIfam" id="TIGR01749">
    <property type="entry name" value="fabA"/>
    <property type="match status" value="1"/>
</dbReference>
<dbReference type="NCBIfam" id="NF003509">
    <property type="entry name" value="PRK05174.1"/>
    <property type="match status" value="1"/>
</dbReference>
<dbReference type="PANTHER" id="PTHR30272">
    <property type="entry name" value="3-HYDROXYACYL-[ACYL-CARRIER-PROTEIN] DEHYDRATASE"/>
    <property type="match status" value="1"/>
</dbReference>
<dbReference type="PANTHER" id="PTHR30272:SF8">
    <property type="entry name" value="3-HYDROXYDECANOYL-[ACYL-CARRIER-PROTEIN] DEHYDRATASE"/>
    <property type="match status" value="1"/>
</dbReference>
<dbReference type="Pfam" id="PF07977">
    <property type="entry name" value="FabA"/>
    <property type="match status" value="1"/>
</dbReference>
<dbReference type="SUPFAM" id="SSF54637">
    <property type="entry name" value="Thioesterase/thiol ester dehydrase-isomerase"/>
    <property type="match status" value="1"/>
</dbReference>
<evidence type="ECO:0000255" key="1">
    <source>
        <dbReference type="HAMAP-Rule" id="MF_00405"/>
    </source>
</evidence>
<name>FABA_PSEP1</name>
<proteinExistence type="inferred from homology"/>